<keyword id="KW-0963">Cytoplasm</keyword>
<keyword id="KW-0217">Developmental protein</keyword>
<keyword id="KW-0306">Gastrulation</keyword>
<keyword id="KW-1185">Reference proteome</keyword>
<keyword id="KW-0677">Repeat</keyword>
<keyword id="KW-0694">RNA-binding</keyword>
<accession>Q5U259</accession>
<comment type="function">
    <text evidence="1 5">RNA-binding protein that binds to the 3'-UTR region of mRNAs and increases their stability. Involved in embryonic stem cells (ESCs) differentiation: preferentially binds mRNAs that are not methylated by N6-methyladenosine (m6A), stabilizing them, promoting ESCs differentiation (By similarity). Binds to poly-U elements and AU-rich elements (AREs) in the 3'-UTR of target mRNAs. Acts cooperatively with cribp to stabilize AU-rich sequence (ARE)-containing mRNAs. May play a role during gastrulation. Required for the vegetal localization of vg1 mRNA.</text>
</comment>
<comment type="subunit">
    <text evidence="2 5">Interacts (via RRM3) with cirbp. Unable to form oligomers (By similarity). Part of a ribonucleoprotein (RNP) complex, at least composed of elavl1/elrA and/or elavl2/elrB, igf2bp3/vg1RBP, ddx6/Xp54, ybx2/frgy2, lsm14b/rap55b and, in a subset of RNP complexes, stau1/staufen.</text>
</comment>
<comment type="subcellular location">
    <subcellularLocation>
        <location evidence="5">Cytoplasm</location>
    </subcellularLocation>
    <subcellularLocation>
        <location evidence="5">Cytoplasm</location>
        <location evidence="5">Cell cortex</location>
    </subcellularLocation>
    <text evidence="5">Enriched at the vegetal cortex in stage III and IV oocytes. Shows very weak nuclear localization.</text>
</comment>
<comment type="similarity">
    <text evidence="3">Belongs to the RRM elav family.</text>
</comment>
<dbReference type="EMBL" id="BC086269">
    <property type="protein sequence ID" value="AAH86269.1"/>
    <property type="molecule type" value="mRNA"/>
</dbReference>
<dbReference type="RefSeq" id="NP_001088628.1">
    <property type="nucleotide sequence ID" value="NM_001095159.1"/>
</dbReference>
<dbReference type="SMR" id="Q5U259"/>
<dbReference type="DNASU" id="495680"/>
<dbReference type="GeneID" id="495680"/>
<dbReference type="KEGG" id="xla:495680"/>
<dbReference type="AGR" id="Xenbase:XB-GENE-865489"/>
<dbReference type="CTD" id="495680"/>
<dbReference type="Xenbase" id="XB-GENE-865489">
    <property type="gene designation" value="elavl1.S"/>
</dbReference>
<dbReference type="OMA" id="NQMRYNN"/>
<dbReference type="OrthoDB" id="266020at2759"/>
<dbReference type="Proteomes" id="UP000186698">
    <property type="component" value="Chromosome 1S"/>
</dbReference>
<dbReference type="Bgee" id="495680">
    <property type="expression patterns" value="Expressed in gastrula and 19 other cell types or tissues"/>
</dbReference>
<dbReference type="GO" id="GO:0005938">
    <property type="term" value="C:cell cortex"/>
    <property type="evidence" value="ECO:0000314"/>
    <property type="project" value="UniProtKB"/>
</dbReference>
<dbReference type="GO" id="GO:0005737">
    <property type="term" value="C:cytoplasm"/>
    <property type="evidence" value="ECO:0000314"/>
    <property type="project" value="UniProtKB"/>
</dbReference>
<dbReference type="GO" id="GO:0005634">
    <property type="term" value="C:nucleus"/>
    <property type="evidence" value="ECO:0000314"/>
    <property type="project" value="UniProtKB"/>
</dbReference>
<dbReference type="GO" id="GO:1990904">
    <property type="term" value="C:ribonucleoprotein complex"/>
    <property type="evidence" value="ECO:0000353"/>
    <property type="project" value="UniProtKB"/>
</dbReference>
<dbReference type="GO" id="GO:0035925">
    <property type="term" value="F:mRNA 3'-UTR AU-rich region binding"/>
    <property type="evidence" value="ECO:0000250"/>
    <property type="project" value="UniProtKB"/>
</dbReference>
<dbReference type="GO" id="GO:0003730">
    <property type="term" value="F:mRNA 3'-UTR binding"/>
    <property type="evidence" value="ECO:0000314"/>
    <property type="project" value="UniProtKB"/>
</dbReference>
<dbReference type="GO" id="GO:0008266">
    <property type="term" value="F:poly(U) RNA binding"/>
    <property type="evidence" value="ECO:0000250"/>
    <property type="project" value="UniProtKB"/>
</dbReference>
<dbReference type="GO" id="GO:0070935">
    <property type="term" value="P:3'-UTR-mediated mRNA stabilization"/>
    <property type="evidence" value="ECO:0000250"/>
    <property type="project" value="UniProtKB"/>
</dbReference>
<dbReference type="GO" id="GO:0007369">
    <property type="term" value="P:gastrulation"/>
    <property type="evidence" value="ECO:0000250"/>
    <property type="project" value="UniProtKB"/>
</dbReference>
<dbReference type="GO" id="GO:0008298">
    <property type="term" value="P:intracellular mRNA localization"/>
    <property type="evidence" value="ECO:0000315"/>
    <property type="project" value="UniProtKB"/>
</dbReference>
<dbReference type="GO" id="GO:0048255">
    <property type="term" value="P:mRNA stabilization"/>
    <property type="evidence" value="ECO:0000250"/>
    <property type="project" value="UniProtKB"/>
</dbReference>
<dbReference type="GO" id="GO:2000036">
    <property type="term" value="P:regulation of stem cell population maintenance"/>
    <property type="evidence" value="ECO:0000250"/>
    <property type="project" value="UniProtKB"/>
</dbReference>
<dbReference type="CDD" id="cd12769">
    <property type="entry name" value="RRM1_HuR"/>
    <property type="match status" value="1"/>
</dbReference>
<dbReference type="CDD" id="cd12773">
    <property type="entry name" value="RRM2_HuR"/>
    <property type="match status" value="1"/>
</dbReference>
<dbReference type="CDD" id="cd12653">
    <property type="entry name" value="RRM3_HuR"/>
    <property type="match status" value="1"/>
</dbReference>
<dbReference type="FunFam" id="3.30.70.330:FF:000006">
    <property type="entry name" value="ELAV-like 3"/>
    <property type="match status" value="1"/>
</dbReference>
<dbReference type="FunFam" id="3.30.70.330:FF:000005">
    <property type="entry name" value="ELAV-like protein"/>
    <property type="match status" value="1"/>
</dbReference>
<dbReference type="FunFam" id="3.30.70.330:FF:000215">
    <property type="entry name" value="ELAV-like protein"/>
    <property type="match status" value="1"/>
</dbReference>
<dbReference type="Gene3D" id="3.30.70.330">
    <property type="match status" value="3"/>
</dbReference>
<dbReference type="InterPro" id="IPR006548">
    <property type="entry name" value="ELAD_HU_SF"/>
</dbReference>
<dbReference type="InterPro" id="IPR002343">
    <property type="entry name" value="Hud_Sxl_RNA"/>
</dbReference>
<dbReference type="InterPro" id="IPR034996">
    <property type="entry name" value="HuR_RRM2"/>
</dbReference>
<dbReference type="InterPro" id="IPR012677">
    <property type="entry name" value="Nucleotide-bd_a/b_plait_sf"/>
</dbReference>
<dbReference type="InterPro" id="IPR035979">
    <property type="entry name" value="RBD_domain_sf"/>
</dbReference>
<dbReference type="InterPro" id="IPR000504">
    <property type="entry name" value="RRM_dom"/>
</dbReference>
<dbReference type="NCBIfam" id="TIGR01661">
    <property type="entry name" value="ELAV_HUD_SF"/>
    <property type="match status" value="1"/>
</dbReference>
<dbReference type="PANTHER" id="PTHR10352">
    <property type="entry name" value="EUKARYOTIC TRANSLATION INITIATION FACTOR 3 SUBUNIT G"/>
    <property type="match status" value="1"/>
</dbReference>
<dbReference type="Pfam" id="PF00076">
    <property type="entry name" value="RRM_1"/>
    <property type="match status" value="3"/>
</dbReference>
<dbReference type="PRINTS" id="PR00961">
    <property type="entry name" value="HUDSXLRNA"/>
</dbReference>
<dbReference type="SMART" id="SM00360">
    <property type="entry name" value="RRM"/>
    <property type="match status" value="3"/>
</dbReference>
<dbReference type="SUPFAM" id="SSF54928">
    <property type="entry name" value="RNA-binding domain, RBD"/>
    <property type="match status" value="2"/>
</dbReference>
<dbReference type="PROSITE" id="PS50102">
    <property type="entry name" value="RRM"/>
    <property type="match status" value="3"/>
</dbReference>
<proteinExistence type="evidence at protein level"/>
<name>ELV1B_XENLA</name>
<gene>
    <name type="primary">elavl1-b</name>
    <name type="synonym">elavl1</name>
    <name evidence="6" type="synonym">elrA</name>
</gene>
<protein>
    <recommendedName>
        <fullName>ELAV-like protein 1-B</fullName>
    </recommendedName>
    <alternativeName>
        <fullName>Protein ElrA-B</fullName>
        <shortName evidence="6">ElrA</shortName>
    </alternativeName>
</protein>
<sequence length="326" mass="36008">MSNGYEDHMDDVCRDDIGRTNLIVNYLPQNMTQDELRSLFSSIGEVESAKLIRDKVAGHSLGYGFVNYLNAKDAERAINTLNGLRLQSKTIKVSFARPSSETIKDANLYISGLPRTMTQKDVEDMFLPFGHIINSRVLVDQATGLSRGVAFIRFDKRSEAEEAIASFNGHKPPGSSEPITVKFAANPNQSKNMALLSQICHSPARRFGGPVHHQAQRFRFSPMGVDHMSSISSVNVASSASSGWCIFIYNLGQDADEGILWQMFGPFGAVTNVKVIRDFNTNKCKGFGFVTMTNYEEAAMAIASLNGYRLGDKTLQVSFKTSKSHK</sequence>
<evidence type="ECO:0000250" key="1">
    <source>
        <dbReference type="UniProtKB" id="Q15717"/>
    </source>
</evidence>
<evidence type="ECO:0000250" key="2">
    <source>
        <dbReference type="UniProtKB" id="Q1JQ73"/>
    </source>
</evidence>
<evidence type="ECO:0000255" key="3"/>
<evidence type="ECO:0000255" key="4">
    <source>
        <dbReference type="PROSITE-ProRule" id="PRU00176"/>
    </source>
</evidence>
<evidence type="ECO:0000269" key="5">
    <source>
    </source>
</evidence>
<evidence type="ECO:0000303" key="6">
    <source>
    </source>
</evidence>
<evidence type="ECO:0000305" key="7"/>
<evidence type="ECO:0000312" key="8">
    <source>
        <dbReference type="EMBL" id="AAH86269.1"/>
    </source>
</evidence>
<feature type="chain" id="PRO_0000391369" description="ELAV-like protein 1-B">
    <location>
        <begin position="1"/>
        <end position="326"/>
    </location>
</feature>
<feature type="domain" description="RRM 1" evidence="4">
    <location>
        <begin position="20"/>
        <end position="98"/>
    </location>
</feature>
<feature type="domain" description="RRM 2" evidence="4">
    <location>
        <begin position="106"/>
        <end position="186"/>
    </location>
</feature>
<feature type="domain" description="RRM 3" evidence="4">
    <location>
        <begin position="244"/>
        <end position="322"/>
    </location>
</feature>
<reference evidence="8" key="1">
    <citation type="submission" date="2004-11" db="EMBL/GenBank/DDBJ databases">
        <authorList>
            <consortium name="NIH - Xenopus Gene Collection (XGC) project"/>
        </authorList>
    </citation>
    <scope>NUCLEOTIDE SEQUENCE [LARGE SCALE MRNA]</scope>
    <source>
        <tissue evidence="8">Gastrula</tissue>
    </source>
</reference>
<reference evidence="7" key="2">
    <citation type="journal article" date="2009" name="J. Biol. Chem.">
        <title>Participation of Xenopus Elr-type proteins in vegetal mRNA localization during oogenesis.</title>
        <authorList>
            <person name="Arthur P.K."/>
            <person name="Claussen M."/>
            <person name="Koch S."/>
            <person name="Tarbashevich K."/>
            <person name="Jahn O."/>
            <person name="Pieler T."/>
        </authorList>
    </citation>
    <scope>FUNCTION</scope>
    <scope>IDENTIFICATION IN A RIBONUCLEOPROTEIN COMPLEX WITH IGF2BP3; STAU1; DDX6; LSM14B AND YBX2</scope>
    <scope>SUBCELLULAR LOCATION</scope>
</reference>
<organism>
    <name type="scientific">Xenopus laevis</name>
    <name type="common">African clawed frog</name>
    <dbReference type="NCBI Taxonomy" id="8355"/>
    <lineage>
        <taxon>Eukaryota</taxon>
        <taxon>Metazoa</taxon>
        <taxon>Chordata</taxon>
        <taxon>Craniata</taxon>
        <taxon>Vertebrata</taxon>
        <taxon>Euteleostomi</taxon>
        <taxon>Amphibia</taxon>
        <taxon>Batrachia</taxon>
        <taxon>Anura</taxon>
        <taxon>Pipoidea</taxon>
        <taxon>Pipidae</taxon>
        <taxon>Xenopodinae</taxon>
        <taxon>Xenopus</taxon>
        <taxon>Xenopus</taxon>
    </lineage>
</organism>